<name>MATK_VITVI</name>
<evidence type="ECO:0000255" key="1">
    <source>
        <dbReference type="HAMAP-Rule" id="MF_01390"/>
    </source>
</evidence>
<accession>Q0ZJ39</accession>
<gene>
    <name evidence="1" type="primary">matK</name>
</gene>
<protein>
    <recommendedName>
        <fullName evidence="1">Maturase K</fullName>
    </recommendedName>
    <alternativeName>
        <fullName evidence="1">Intron maturase</fullName>
    </alternativeName>
</protein>
<comment type="function">
    <text evidence="1">Usually encoded in the trnK tRNA gene intron. Probably assists in splicing its own and other chloroplast group II introns.</text>
</comment>
<comment type="subcellular location">
    <subcellularLocation>
        <location>Plastid</location>
        <location>Chloroplast</location>
    </subcellularLocation>
</comment>
<comment type="similarity">
    <text evidence="1">Belongs to the intron maturase 2 family. MatK subfamily.</text>
</comment>
<dbReference type="EMBL" id="DQ424856">
    <property type="protein sequence ID" value="ABE47515.1"/>
    <property type="molecule type" value="Genomic_DNA"/>
</dbReference>
<dbReference type="RefSeq" id="YP_567057.1">
    <property type="nucleotide sequence ID" value="NC_007957.1"/>
</dbReference>
<dbReference type="STRING" id="29760.Q0ZJ39"/>
<dbReference type="GeneID" id="4025120"/>
<dbReference type="KEGG" id="vvi:4025120"/>
<dbReference type="InParanoid" id="Q0ZJ39"/>
<dbReference type="OrthoDB" id="1886907at2759"/>
<dbReference type="Proteomes" id="UP000009183">
    <property type="component" value="Chloroplast"/>
</dbReference>
<dbReference type="ExpressionAtlas" id="Q0ZJ39">
    <property type="expression patterns" value="baseline"/>
</dbReference>
<dbReference type="GO" id="GO:0009507">
    <property type="term" value="C:chloroplast"/>
    <property type="evidence" value="ECO:0007669"/>
    <property type="project" value="UniProtKB-SubCell"/>
</dbReference>
<dbReference type="GO" id="GO:0003723">
    <property type="term" value="F:RNA binding"/>
    <property type="evidence" value="ECO:0007669"/>
    <property type="project" value="UniProtKB-KW"/>
</dbReference>
<dbReference type="GO" id="GO:0006397">
    <property type="term" value="P:mRNA processing"/>
    <property type="evidence" value="ECO:0007669"/>
    <property type="project" value="UniProtKB-KW"/>
</dbReference>
<dbReference type="GO" id="GO:0008380">
    <property type="term" value="P:RNA splicing"/>
    <property type="evidence" value="ECO:0007669"/>
    <property type="project" value="UniProtKB-UniRule"/>
</dbReference>
<dbReference type="GO" id="GO:0008033">
    <property type="term" value="P:tRNA processing"/>
    <property type="evidence" value="ECO:0007669"/>
    <property type="project" value="UniProtKB-KW"/>
</dbReference>
<dbReference type="HAMAP" id="MF_01390">
    <property type="entry name" value="MatK"/>
    <property type="match status" value="1"/>
</dbReference>
<dbReference type="InterPro" id="IPR024937">
    <property type="entry name" value="Domain_X"/>
</dbReference>
<dbReference type="InterPro" id="IPR002866">
    <property type="entry name" value="Maturase_MatK"/>
</dbReference>
<dbReference type="InterPro" id="IPR024942">
    <property type="entry name" value="Maturase_MatK_N"/>
</dbReference>
<dbReference type="PANTHER" id="PTHR34811">
    <property type="entry name" value="MATURASE K"/>
    <property type="match status" value="1"/>
</dbReference>
<dbReference type="PANTHER" id="PTHR34811:SF1">
    <property type="entry name" value="MATURASE K"/>
    <property type="match status" value="1"/>
</dbReference>
<dbReference type="Pfam" id="PF01348">
    <property type="entry name" value="Intron_maturas2"/>
    <property type="match status" value="1"/>
</dbReference>
<dbReference type="Pfam" id="PF01824">
    <property type="entry name" value="MatK_N"/>
    <property type="match status" value="1"/>
</dbReference>
<keyword id="KW-0150">Chloroplast</keyword>
<keyword id="KW-0507">mRNA processing</keyword>
<keyword id="KW-0934">Plastid</keyword>
<keyword id="KW-1185">Reference proteome</keyword>
<keyword id="KW-0694">RNA-binding</keyword>
<keyword id="KW-0819">tRNA processing</keyword>
<reference key="1">
    <citation type="journal article" date="2006" name="BMC Evol. Biol.">
        <title>Phylogenetic analyses of Vitis (Vitaceae) based on complete chloroplast genome sequences: effects of taxon sampling and phylogenetic methods on resolving relationships among rosids.</title>
        <authorList>
            <person name="Jansen R.K."/>
            <person name="Kaittanis C."/>
            <person name="Lee S.-B."/>
            <person name="Saski C."/>
            <person name="Tomkins J."/>
            <person name="Alverson A.J."/>
            <person name="Daniell H."/>
        </authorList>
    </citation>
    <scope>NUCLEOTIDE SEQUENCE [LARGE SCALE GENOMIC DNA]</scope>
    <source>
        <strain>cv. Maxxa</strain>
    </source>
</reference>
<proteinExistence type="inferred from homology"/>
<geneLocation type="chloroplast"/>
<feature type="chain" id="PRO_0000355964" description="Maturase K">
    <location>
        <begin position="1"/>
        <end position="502"/>
    </location>
</feature>
<sequence length="502" mass="59442">MEGVQRYFKLDRSRQDDFLYPLIFQEYIYALSYDHGLNRSILLENVGYDNKSSLLIVKRLITRMYQQNHLIFSDSNQNPFFGHNKNFYSQMISEGFGVIVEIPFSLRLVSSLEGKEIAKSHNLRSIHSIFPFLEDKFPHLKYVSDILIPHPIHLEILVQALRYWVKDASSLHLLRFFLHEYHNWNSMITPKKSISIFSKRNQRFFLFLYNFHVCEYDSIFIFIRNQSYHLRSTSYGALLGRIFFYGKIEHFVEVFANDFQTILWLFKNPFMHYVRYQGKSILASKGAPLLMNKWKYYLVNFWQCHFYVWSQPVRIHINQLSKHSLDFLGYLSSVRLNPSVVRSQMLENAFIIDNAIKKFDTIVPIIPIIGSLAKARFCNALGHPISKPSWADSSDYDIIDRFVRICRNISHYHSGSSKKKNLYRIKYILRLSCARTLARKHKSTVRAFLKRLGSEFLEEFLTEEEQALSLILPRVSSTSRSLYRGRFWYFDIICINDLANHE</sequence>
<organism>
    <name type="scientific">Vitis vinifera</name>
    <name type="common">Grape</name>
    <dbReference type="NCBI Taxonomy" id="29760"/>
    <lineage>
        <taxon>Eukaryota</taxon>
        <taxon>Viridiplantae</taxon>
        <taxon>Streptophyta</taxon>
        <taxon>Embryophyta</taxon>
        <taxon>Tracheophyta</taxon>
        <taxon>Spermatophyta</taxon>
        <taxon>Magnoliopsida</taxon>
        <taxon>eudicotyledons</taxon>
        <taxon>Gunneridae</taxon>
        <taxon>Pentapetalae</taxon>
        <taxon>rosids</taxon>
        <taxon>Vitales</taxon>
        <taxon>Vitaceae</taxon>
        <taxon>Viteae</taxon>
        <taxon>Vitis</taxon>
    </lineage>
</organism>